<comment type="function">
    <text evidence="2">A cytochrome P450 monooxygenase involved in the metabolism of fatty acids. Mechanistically, uses molecular oxygen inserting one oxygen atom into a substrate, and reducing the second into a water molecule, with two electrons provided by NADPH via cytochrome P450 reductase (NADPH--hemoprotein reductase). Catalyzes the hydroxylation of carbon-hydrogen bonds. Hydroxylates fatty acids specifically at the omega-1 position displaying the highest catalytic activity for saturated fatty acids. May be involved in the oxidative metabolism of xenobiotics.</text>
</comment>
<comment type="catalytic activity">
    <reaction evidence="2">
        <text>an organic molecule + reduced [NADPH--hemoprotein reductase] + O2 = an alcohol + oxidized [NADPH--hemoprotein reductase] + H2O + H(+)</text>
        <dbReference type="Rhea" id="RHEA:17149"/>
        <dbReference type="Rhea" id="RHEA-COMP:11964"/>
        <dbReference type="Rhea" id="RHEA-COMP:11965"/>
        <dbReference type="ChEBI" id="CHEBI:15377"/>
        <dbReference type="ChEBI" id="CHEBI:15378"/>
        <dbReference type="ChEBI" id="CHEBI:15379"/>
        <dbReference type="ChEBI" id="CHEBI:30879"/>
        <dbReference type="ChEBI" id="CHEBI:57618"/>
        <dbReference type="ChEBI" id="CHEBI:58210"/>
        <dbReference type="ChEBI" id="CHEBI:142491"/>
        <dbReference type="EC" id="1.14.14.1"/>
    </reaction>
    <physiologicalReaction direction="left-to-right" evidence="2">
        <dbReference type="Rhea" id="RHEA:17150"/>
    </physiologicalReaction>
</comment>
<comment type="catalytic activity">
    <reaction evidence="2">
        <text>(5Z,8Z,11Z)-eicosatrienoate + reduced [NADPH--hemoprotein reductase] + O2 = 19-hydroxy-(5Z,8Z,11Z)-eicosatrienoate + oxidized [NADPH--hemoprotein reductase] + H2O + H(+)</text>
        <dbReference type="Rhea" id="RHEA:50076"/>
        <dbReference type="Rhea" id="RHEA-COMP:11964"/>
        <dbReference type="Rhea" id="RHEA-COMP:11965"/>
        <dbReference type="ChEBI" id="CHEBI:15377"/>
        <dbReference type="ChEBI" id="CHEBI:15378"/>
        <dbReference type="ChEBI" id="CHEBI:15379"/>
        <dbReference type="ChEBI" id="CHEBI:57618"/>
        <dbReference type="ChEBI" id="CHEBI:58210"/>
        <dbReference type="ChEBI" id="CHEBI:78043"/>
        <dbReference type="ChEBI" id="CHEBI:132024"/>
    </reaction>
    <physiologicalReaction direction="left-to-right" evidence="2">
        <dbReference type="Rhea" id="RHEA:50077"/>
    </physiologicalReaction>
</comment>
<comment type="catalytic activity">
    <reaction evidence="2">
        <text>(5Z,8Z,11Z,14Z,17Z)-eicosapentaenoate + reduced [NADPH--hemoprotein reductase] + O2 = 19-hydroxy-(5Z,8Z,11Z,14Z,17Z)-eicosapentaenoate + oxidized [NADPH--hemoprotein reductase] + H2O + H(+)</text>
        <dbReference type="Rhea" id="RHEA:39787"/>
        <dbReference type="Rhea" id="RHEA-COMP:11964"/>
        <dbReference type="Rhea" id="RHEA-COMP:11965"/>
        <dbReference type="ChEBI" id="CHEBI:15377"/>
        <dbReference type="ChEBI" id="CHEBI:15378"/>
        <dbReference type="ChEBI" id="CHEBI:15379"/>
        <dbReference type="ChEBI" id="CHEBI:57618"/>
        <dbReference type="ChEBI" id="CHEBI:58210"/>
        <dbReference type="ChEBI" id="CHEBI:58562"/>
        <dbReference type="ChEBI" id="CHEBI:76636"/>
    </reaction>
    <physiologicalReaction direction="left-to-right" evidence="2">
        <dbReference type="Rhea" id="RHEA:39788"/>
    </physiologicalReaction>
</comment>
<comment type="catalytic activity">
    <reaction evidence="2">
        <text>(4Z,7Z,10Z,13Z,16Z,19Z)-docosahexaenoate + reduced [NADPH--hemoprotein reductase] + O2 = 21-hydroxy-(4Z,7Z,10Z,13Z,16Z,19Z)-docosahexaenoate + oxidized [NADPH--hemoprotein reductase] + H2O + H(+)</text>
        <dbReference type="Rhea" id="RHEA:50088"/>
        <dbReference type="Rhea" id="RHEA-COMP:11964"/>
        <dbReference type="Rhea" id="RHEA-COMP:11965"/>
        <dbReference type="ChEBI" id="CHEBI:15377"/>
        <dbReference type="ChEBI" id="CHEBI:15378"/>
        <dbReference type="ChEBI" id="CHEBI:15379"/>
        <dbReference type="ChEBI" id="CHEBI:57618"/>
        <dbReference type="ChEBI" id="CHEBI:58210"/>
        <dbReference type="ChEBI" id="CHEBI:77016"/>
        <dbReference type="ChEBI" id="CHEBI:132025"/>
    </reaction>
    <physiologicalReaction direction="left-to-right" evidence="2">
        <dbReference type="Rhea" id="RHEA:50089"/>
    </physiologicalReaction>
</comment>
<comment type="catalytic activity">
    <reaction evidence="2">
        <text>dodecanoate + reduced [NADPH--hemoprotein reductase] + O2 = 11-hydroxydodecanoate + oxidized [NADPH--hemoprotein reductase] + H2O + H(+)</text>
        <dbReference type="Rhea" id="RHEA:39751"/>
        <dbReference type="Rhea" id="RHEA-COMP:11964"/>
        <dbReference type="Rhea" id="RHEA-COMP:11965"/>
        <dbReference type="ChEBI" id="CHEBI:15377"/>
        <dbReference type="ChEBI" id="CHEBI:15378"/>
        <dbReference type="ChEBI" id="CHEBI:15379"/>
        <dbReference type="ChEBI" id="CHEBI:18262"/>
        <dbReference type="ChEBI" id="CHEBI:57618"/>
        <dbReference type="ChEBI" id="CHEBI:58210"/>
        <dbReference type="ChEBI" id="CHEBI:76628"/>
    </reaction>
    <physiologicalReaction direction="left-to-right" evidence="2">
        <dbReference type="Rhea" id="RHEA:39752"/>
    </physiologicalReaction>
</comment>
<comment type="catalytic activity">
    <reaction evidence="2">
        <text>tetradecanoate + reduced [NADPH--hemoprotein reductase] + O2 = 13-hydroxytetradecanoate + oxidized [NADPH--hemoprotein reductase] + H2O + H(+)</text>
        <dbReference type="Rhea" id="RHEA:50096"/>
        <dbReference type="Rhea" id="RHEA-COMP:11964"/>
        <dbReference type="Rhea" id="RHEA-COMP:11965"/>
        <dbReference type="ChEBI" id="CHEBI:15377"/>
        <dbReference type="ChEBI" id="CHEBI:15378"/>
        <dbReference type="ChEBI" id="CHEBI:15379"/>
        <dbReference type="ChEBI" id="CHEBI:30807"/>
        <dbReference type="ChEBI" id="CHEBI:57618"/>
        <dbReference type="ChEBI" id="CHEBI:58210"/>
        <dbReference type="ChEBI" id="CHEBI:132031"/>
    </reaction>
    <physiologicalReaction direction="left-to-right" evidence="2">
        <dbReference type="Rhea" id="RHEA:50097"/>
    </physiologicalReaction>
</comment>
<comment type="catalytic activity">
    <reaction evidence="2">
        <text>4-nitrophenol + NADPH + O2 + H(+) = 4-nitrocatechol + NADP(+) + H2O</text>
        <dbReference type="Rhea" id="RHEA:26205"/>
        <dbReference type="ChEBI" id="CHEBI:15377"/>
        <dbReference type="ChEBI" id="CHEBI:15378"/>
        <dbReference type="ChEBI" id="CHEBI:15379"/>
        <dbReference type="ChEBI" id="CHEBI:57730"/>
        <dbReference type="ChEBI" id="CHEBI:57783"/>
        <dbReference type="ChEBI" id="CHEBI:57917"/>
        <dbReference type="ChEBI" id="CHEBI:58349"/>
        <dbReference type="EC" id="1.14.13.n7"/>
    </reaction>
    <physiologicalReaction direction="left-to-right" evidence="2">
        <dbReference type="Rhea" id="RHEA:26206"/>
    </physiologicalReaction>
</comment>
<comment type="cofactor">
    <cofactor evidence="1">
        <name>heme</name>
        <dbReference type="ChEBI" id="CHEBI:30413"/>
    </cofactor>
</comment>
<comment type="activity regulation">
    <text evidence="2">The omega-1 hydroxylase activity is stimulated by cytochrome b5.</text>
</comment>
<comment type="pathway">
    <text evidence="2">Lipid metabolism; fatty acid metabolism.</text>
</comment>
<comment type="subunit">
    <text evidence="3">Interacts with chaperones HSP70 and HSP90; this interaction is required for initial targeting to mitochondria.</text>
</comment>
<comment type="subcellular location">
    <subcellularLocation>
        <location evidence="3">Endoplasmic reticulum membrane</location>
        <topology evidence="3">Peripheral membrane protein</topology>
    </subcellularLocation>
    <subcellularLocation>
        <location evidence="3">Microsome membrane</location>
        <topology evidence="3">Peripheral membrane protein</topology>
    </subcellularLocation>
    <subcellularLocation>
        <location evidence="3">Mitochondrion inner membrane</location>
        <topology evidence="3">Peripheral membrane protein</topology>
    </subcellularLocation>
    <text evidence="3">Post-translationally targeted to mitochondria. TOMM70 is required for the translocation across the mitochondrial outer membrane. After translocation into the matrix, associates with the inner membrane as a membrane extrinsic protein.</text>
</comment>
<comment type="induction">
    <text>By ethanol.</text>
</comment>
<comment type="similarity">
    <text evidence="4">Belongs to the cytochrome P450 family.</text>
</comment>
<gene>
    <name type="primary">CYP2E1</name>
    <name type="synonym">CYP2E</name>
</gene>
<accession>Q6GUQ4</accession>
<name>CP2E1_MACMU</name>
<organism>
    <name type="scientific">Macaca mulatta</name>
    <name type="common">Rhesus macaque</name>
    <dbReference type="NCBI Taxonomy" id="9544"/>
    <lineage>
        <taxon>Eukaryota</taxon>
        <taxon>Metazoa</taxon>
        <taxon>Chordata</taxon>
        <taxon>Craniata</taxon>
        <taxon>Vertebrata</taxon>
        <taxon>Euteleostomi</taxon>
        <taxon>Mammalia</taxon>
        <taxon>Eutheria</taxon>
        <taxon>Euarchontoglires</taxon>
        <taxon>Primates</taxon>
        <taxon>Haplorrhini</taxon>
        <taxon>Catarrhini</taxon>
        <taxon>Cercopithecidae</taxon>
        <taxon>Cercopithecinae</taxon>
        <taxon>Macaca</taxon>
    </lineage>
</organism>
<keyword id="KW-0256">Endoplasmic reticulum</keyword>
<keyword id="KW-0276">Fatty acid metabolism</keyword>
<keyword id="KW-0349">Heme</keyword>
<keyword id="KW-0408">Iron</keyword>
<keyword id="KW-0443">Lipid metabolism</keyword>
<keyword id="KW-0472">Membrane</keyword>
<keyword id="KW-0479">Metal-binding</keyword>
<keyword id="KW-0492">Microsome</keyword>
<keyword id="KW-0496">Mitochondrion</keyword>
<keyword id="KW-0999">Mitochondrion inner membrane</keyword>
<keyword id="KW-0503">Monooxygenase</keyword>
<keyword id="KW-0521">NADP</keyword>
<keyword id="KW-0560">Oxidoreductase</keyword>
<keyword id="KW-1185">Reference proteome</keyword>
<feature type="chain" id="PRO_0000051753" description="Cytochrome P450 2E1">
    <location>
        <begin position="1"/>
        <end position="493"/>
    </location>
</feature>
<feature type="binding site" evidence="1">
    <location>
        <begin position="298"/>
        <end position="303"/>
    </location>
    <ligand>
        <name>substrate</name>
    </ligand>
</feature>
<feature type="binding site" description="axial binding residue" evidence="1">
    <location>
        <position position="437"/>
    </location>
    <ligand>
        <name>heme</name>
        <dbReference type="ChEBI" id="CHEBI:30413"/>
    </ligand>
    <ligandPart>
        <name>Fe</name>
        <dbReference type="ChEBI" id="CHEBI:18248"/>
    </ligandPart>
</feature>
<reference key="1">
    <citation type="submission" date="2004-05" db="EMBL/GenBank/DDBJ databases">
        <title>Cloning of rhesus monkey cytochrome P450 2E1 (CYP2E1).</title>
        <authorList>
            <person name="Carr B.A."/>
            <person name="Fang Y."/>
            <person name="Rushmore T.H."/>
        </authorList>
    </citation>
    <scope>NUCLEOTIDE SEQUENCE [MRNA]</scope>
</reference>
<evidence type="ECO:0000250" key="1"/>
<evidence type="ECO:0000250" key="2">
    <source>
        <dbReference type="UniProtKB" id="P05181"/>
    </source>
</evidence>
<evidence type="ECO:0000250" key="3">
    <source>
        <dbReference type="UniProtKB" id="P05182"/>
    </source>
</evidence>
<evidence type="ECO:0000305" key="4"/>
<protein>
    <recommendedName>
        <fullName>Cytochrome P450 2E1</fullName>
        <ecNumber evidence="2">1.14.14.1</ecNumber>
    </recommendedName>
    <alternativeName>
        <fullName>4-nitrophenol 2-hydroxylase</fullName>
        <ecNumber evidence="2">1.14.13.n7</ecNumber>
    </alternativeName>
    <alternativeName>
        <fullName>CYPIIE1</fullName>
    </alternativeName>
</protein>
<sequence>MSALGVSVALLVWVAVLLLVSIWRQVHSSWNLPPGPFPLPIIGNLFQLELKNIPKSFTRLAQRFGPVFTLYVGSRRVVVVHGYKAVREVLLDHKDEFSGRGDIPAFHAHRDRGIIFNNGPTWKDIRRFSLTTLRNYGMGKQGNESRIQREAHFLLEALRKTQGQPFDPTFLIGCAPCNVIADILFRKHFDYNDEKFLRLMYLFNENFQLLSTPWLQLYNNFPSLLHYLPGSHRKVMKNVAEIKEYVSERVKEHLQSLDPNCPRDLTDCLLVEMEKEKHSAERLYTMDGITVTVADLFFAGTETTSTTLRYGLLILMKYPEIEEKLHEEIDRVIGPSRIPAIKDRQEMPYMDAVVHEIQRFITLVPSNLPHEATRDTIFRGYIIPKGTVIVPTLDSVLYDNQEFPDPEKFKPEHFLDESGKFKYSDYFKPFSAGKRVCAGEGLARMELFLLLSAILQHFNLKPLVDPKDIDISPVNIGFGCIPPRFKLCVIPRS</sequence>
<dbReference type="EC" id="1.14.14.1" evidence="2"/>
<dbReference type="EC" id="1.14.13.n7" evidence="2"/>
<dbReference type="EMBL" id="AY635465">
    <property type="protein sequence ID" value="AAT49269.1"/>
    <property type="molecule type" value="mRNA"/>
</dbReference>
<dbReference type="RefSeq" id="NP_001035303.1">
    <property type="nucleotide sequence ID" value="NM_001040213.1"/>
</dbReference>
<dbReference type="SMR" id="Q6GUQ4"/>
<dbReference type="FunCoup" id="Q6GUQ4">
    <property type="interactions" value="528"/>
</dbReference>
<dbReference type="STRING" id="9544.ENSMMUP00000049288"/>
<dbReference type="PaxDb" id="9544-ENSMMUP00000025413"/>
<dbReference type="GeneID" id="678688"/>
<dbReference type="KEGG" id="mcc:678688"/>
<dbReference type="CTD" id="1571"/>
<dbReference type="InParanoid" id="Q6GUQ4"/>
<dbReference type="OrthoDB" id="1103324at2759"/>
<dbReference type="UniPathway" id="UPA00199"/>
<dbReference type="Proteomes" id="UP000006718">
    <property type="component" value="Unassembled WGS sequence"/>
</dbReference>
<dbReference type="GO" id="GO:0005737">
    <property type="term" value="C:cytoplasm"/>
    <property type="evidence" value="ECO:0000318"/>
    <property type="project" value="GO_Central"/>
</dbReference>
<dbReference type="GO" id="GO:0005789">
    <property type="term" value="C:endoplasmic reticulum membrane"/>
    <property type="evidence" value="ECO:0007669"/>
    <property type="project" value="UniProtKB-SubCell"/>
</dbReference>
<dbReference type="GO" id="GO:0043231">
    <property type="term" value="C:intracellular membrane-bounded organelle"/>
    <property type="evidence" value="ECO:0000318"/>
    <property type="project" value="GO_Central"/>
</dbReference>
<dbReference type="GO" id="GO:0005743">
    <property type="term" value="C:mitochondrial inner membrane"/>
    <property type="evidence" value="ECO:0000250"/>
    <property type="project" value="UniProtKB"/>
</dbReference>
<dbReference type="GO" id="GO:0008392">
    <property type="term" value="F:arachidonate epoxygenase activity"/>
    <property type="evidence" value="ECO:0000318"/>
    <property type="project" value="GO_Central"/>
</dbReference>
<dbReference type="GO" id="GO:0020037">
    <property type="term" value="F:heme binding"/>
    <property type="evidence" value="ECO:0000250"/>
    <property type="project" value="UniProtKB"/>
</dbReference>
<dbReference type="GO" id="GO:0030544">
    <property type="term" value="F:Hsp70 protein binding"/>
    <property type="evidence" value="ECO:0000250"/>
    <property type="project" value="UniProtKB"/>
</dbReference>
<dbReference type="GO" id="GO:0051879">
    <property type="term" value="F:Hsp90 protein binding"/>
    <property type="evidence" value="ECO:0000250"/>
    <property type="project" value="UniProtKB"/>
</dbReference>
<dbReference type="GO" id="GO:0005506">
    <property type="term" value="F:iron ion binding"/>
    <property type="evidence" value="ECO:0007669"/>
    <property type="project" value="InterPro"/>
</dbReference>
<dbReference type="GO" id="GO:0016712">
    <property type="term" value="F:oxidoreductase activity, acting on paired donors, with incorporation or reduction of molecular oxygen, reduced flavin or flavoprotein as one donor, and incorporation of one atom of oxygen"/>
    <property type="evidence" value="ECO:0000318"/>
    <property type="project" value="GO_Central"/>
</dbReference>
<dbReference type="GO" id="GO:0019373">
    <property type="term" value="P:epoxygenase P450 pathway"/>
    <property type="evidence" value="ECO:0000318"/>
    <property type="project" value="GO_Central"/>
</dbReference>
<dbReference type="GO" id="GO:0006805">
    <property type="term" value="P:xenobiotic metabolic process"/>
    <property type="evidence" value="ECO:0000318"/>
    <property type="project" value="GO_Central"/>
</dbReference>
<dbReference type="CDD" id="cd20665">
    <property type="entry name" value="CYP2C-like"/>
    <property type="match status" value="1"/>
</dbReference>
<dbReference type="FunFam" id="1.10.630.10:FF:000001">
    <property type="entry name" value="Cytochrome P450, family 2"/>
    <property type="match status" value="1"/>
</dbReference>
<dbReference type="Gene3D" id="1.10.630.10">
    <property type="entry name" value="Cytochrome P450"/>
    <property type="match status" value="1"/>
</dbReference>
<dbReference type="InterPro" id="IPR001128">
    <property type="entry name" value="Cyt_P450"/>
</dbReference>
<dbReference type="InterPro" id="IPR017972">
    <property type="entry name" value="Cyt_P450_CS"/>
</dbReference>
<dbReference type="InterPro" id="IPR002401">
    <property type="entry name" value="Cyt_P450_E_grp-I"/>
</dbReference>
<dbReference type="InterPro" id="IPR008070">
    <property type="entry name" value="Cyt_P450_E_grp-I_CYP2E-like"/>
</dbReference>
<dbReference type="InterPro" id="IPR036396">
    <property type="entry name" value="Cyt_P450_sf"/>
</dbReference>
<dbReference type="InterPro" id="IPR050182">
    <property type="entry name" value="Cytochrome_P450_fam2"/>
</dbReference>
<dbReference type="PANTHER" id="PTHR24300:SF356">
    <property type="entry name" value="CYTOCHROME P450 2E1"/>
    <property type="match status" value="1"/>
</dbReference>
<dbReference type="PANTHER" id="PTHR24300">
    <property type="entry name" value="CYTOCHROME P450 508A4-RELATED"/>
    <property type="match status" value="1"/>
</dbReference>
<dbReference type="Pfam" id="PF00067">
    <property type="entry name" value="p450"/>
    <property type="match status" value="1"/>
</dbReference>
<dbReference type="PRINTS" id="PR00463">
    <property type="entry name" value="EP450I"/>
</dbReference>
<dbReference type="PRINTS" id="PR01687">
    <property type="entry name" value="EP450ICYP2E"/>
</dbReference>
<dbReference type="PRINTS" id="PR00385">
    <property type="entry name" value="P450"/>
</dbReference>
<dbReference type="SUPFAM" id="SSF48264">
    <property type="entry name" value="Cytochrome P450"/>
    <property type="match status" value="1"/>
</dbReference>
<dbReference type="PROSITE" id="PS00086">
    <property type="entry name" value="CYTOCHROME_P450"/>
    <property type="match status" value="1"/>
</dbReference>
<proteinExistence type="evidence at transcript level"/>